<dbReference type="EMBL" id="CP000822">
    <property type="protein sequence ID" value="ABV15760.1"/>
    <property type="molecule type" value="Genomic_DNA"/>
</dbReference>
<dbReference type="RefSeq" id="WP_001140434.1">
    <property type="nucleotide sequence ID" value="NC_009792.1"/>
</dbReference>
<dbReference type="SMR" id="A8AQJ6"/>
<dbReference type="STRING" id="290338.CKO_04715"/>
<dbReference type="GeneID" id="97393185"/>
<dbReference type="KEGG" id="cko:CKO_04715"/>
<dbReference type="HOGENOM" id="CLU_131047_1_4_6"/>
<dbReference type="OrthoDB" id="9812790at2"/>
<dbReference type="Proteomes" id="UP000008148">
    <property type="component" value="Chromosome"/>
</dbReference>
<dbReference type="GO" id="GO:0022625">
    <property type="term" value="C:cytosolic large ribosomal subunit"/>
    <property type="evidence" value="ECO:0007669"/>
    <property type="project" value="TreeGrafter"/>
</dbReference>
<dbReference type="GO" id="GO:0003735">
    <property type="term" value="F:structural constituent of ribosome"/>
    <property type="evidence" value="ECO:0007669"/>
    <property type="project" value="InterPro"/>
</dbReference>
<dbReference type="GO" id="GO:0006412">
    <property type="term" value="P:translation"/>
    <property type="evidence" value="ECO:0007669"/>
    <property type="project" value="UniProtKB-UniRule"/>
</dbReference>
<dbReference type="CDD" id="cd01658">
    <property type="entry name" value="Ribosomal_L30"/>
    <property type="match status" value="1"/>
</dbReference>
<dbReference type="FunFam" id="3.30.1390.20:FF:000001">
    <property type="entry name" value="50S ribosomal protein L30"/>
    <property type="match status" value="1"/>
</dbReference>
<dbReference type="Gene3D" id="3.30.1390.20">
    <property type="entry name" value="Ribosomal protein L30, ferredoxin-like fold domain"/>
    <property type="match status" value="1"/>
</dbReference>
<dbReference type="HAMAP" id="MF_01371_B">
    <property type="entry name" value="Ribosomal_uL30_B"/>
    <property type="match status" value="1"/>
</dbReference>
<dbReference type="InterPro" id="IPR036919">
    <property type="entry name" value="Ribo_uL30_ferredoxin-like_sf"/>
</dbReference>
<dbReference type="InterPro" id="IPR005996">
    <property type="entry name" value="Ribosomal_uL30_bac-type"/>
</dbReference>
<dbReference type="InterPro" id="IPR018038">
    <property type="entry name" value="Ribosomal_uL30_CS"/>
</dbReference>
<dbReference type="InterPro" id="IPR016082">
    <property type="entry name" value="Ribosomal_uL30_ferredoxin-like"/>
</dbReference>
<dbReference type="NCBIfam" id="TIGR01308">
    <property type="entry name" value="rpmD_bact"/>
    <property type="match status" value="1"/>
</dbReference>
<dbReference type="PANTHER" id="PTHR15892:SF2">
    <property type="entry name" value="LARGE RIBOSOMAL SUBUNIT PROTEIN UL30M"/>
    <property type="match status" value="1"/>
</dbReference>
<dbReference type="PANTHER" id="PTHR15892">
    <property type="entry name" value="MITOCHONDRIAL RIBOSOMAL PROTEIN L30"/>
    <property type="match status" value="1"/>
</dbReference>
<dbReference type="Pfam" id="PF00327">
    <property type="entry name" value="Ribosomal_L30"/>
    <property type="match status" value="1"/>
</dbReference>
<dbReference type="PIRSF" id="PIRSF002211">
    <property type="entry name" value="Ribosomal_L30_bac-type"/>
    <property type="match status" value="1"/>
</dbReference>
<dbReference type="SUPFAM" id="SSF55129">
    <property type="entry name" value="Ribosomal protein L30p/L7e"/>
    <property type="match status" value="1"/>
</dbReference>
<dbReference type="PROSITE" id="PS00634">
    <property type="entry name" value="RIBOSOMAL_L30"/>
    <property type="match status" value="1"/>
</dbReference>
<gene>
    <name evidence="1" type="primary">rpmD</name>
    <name type="ordered locus">CKO_04715</name>
</gene>
<name>RL30_CITK8</name>
<accession>A8AQJ6</accession>
<feature type="chain" id="PRO_1000056026" description="Large ribosomal subunit protein uL30">
    <location>
        <begin position="1"/>
        <end position="59"/>
    </location>
</feature>
<reference key="1">
    <citation type="submission" date="2007-08" db="EMBL/GenBank/DDBJ databases">
        <authorList>
            <consortium name="The Citrobacter koseri Genome Sequencing Project"/>
            <person name="McClelland M."/>
            <person name="Sanderson E.K."/>
            <person name="Porwollik S."/>
            <person name="Spieth J."/>
            <person name="Clifton W.S."/>
            <person name="Latreille P."/>
            <person name="Courtney L."/>
            <person name="Wang C."/>
            <person name="Pepin K."/>
            <person name="Bhonagiri V."/>
            <person name="Nash W."/>
            <person name="Johnson M."/>
            <person name="Thiruvilangam P."/>
            <person name="Wilson R."/>
        </authorList>
    </citation>
    <scope>NUCLEOTIDE SEQUENCE [LARGE SCALE GENOMIC DNA]</scope>
    <source>
        <strain>ATCC BAA-895 / CDC 4225-83 / SGSC4696</strain>
    </source>
</reference>
<comment type="subunit">
    <text evidence="1">Part of the 50S ribosomal subunit.</text>
</comment>
<comment type="similarity">
    <text evidence="1">Belongs to the universal ribosomal protein uL30 family.</text>
</comment>
<protein>
    <recommendedName>
        <fullName evidence="1">Large ribosomal subunit protein uL30</fullName>
    </recommendedName>
    <alternativeName>
        <fullName evidence="2">50S ribosomal protein L30</fullName>
    </alternativeName>
</protein>
<sequence length="59" mass="6514">MAKTIKITQTRSAIGRLPKHKATLLGLGLRRIGHTVEREDTPAVRGMVNAVSFMVKVEE</sequence>
<organism>
    <name type="scientific">Citrobacter koseri (strain ATCC BAA-895 / CDC 4225-83 / SGSC4696)</name>
    <dbReference type="NCBI Taxonomy" id="290338"/>
    <lineage>
        <taxon>Bacteria</taxon>
        <taxon>Pseudomonadati</taxon>
        <taxon>Pseudomonadota</taxon>
        <taxon>Gammaproteobacteria</taxon>
        <taxon>Enterobacterales</taxon>
        <taxon>Enterobacteriaceae</taxon>
        <taxon>Citrobacter</taxon>
    </lineage>
</organism>
<keyword id="KW-1185">Reference proteome</keyword>
<keyword id="KW-0687">Ribonucleoprotein</keyword>
<keyword id="KW-0689">Ribosomal protein</keyword>
<evidence type="ECO:0000255" key="1">
    <source>
        <dbReference type="HAMAP-Rule" id="MF_01371"/>
    </source>
</evidence>
<evidence type="ECO:0000305" key="2"/>
<proteinExistence type="inferred from homology"/>